<protein>
    <recommendedName>
        <fullName evidence="1">ATP-dependent DNA helicase DinG</fullName>
        <ecNumber evidence="1">5.6.2.3</ecNumber>
    </recommendedName>
    <alternativeName>
        <fullName evidence="1">DNA 5'-3' helicase subunit DinG</fullName>
    </alternativeName>
</protein>
<accession>Q8X7X9</accession>
<accession>Q7AGC5</accession>
<dbReference type="EC" id="5.6.2.3" evidence="1"/>
<dbReference type="EMBL" id="AE005174">
    <property type="protein sequence ID" value="AAG55171.1"/>
    <property type="molecule type" value="Genomic_DNA"/>
</dbReference>
<dbReference type="EMBL" id="BA000007">
    <property type="protein sequence ID" value="BAB34300.1"/>
    <property type="molecule type" value="Genomic_DNA"/>
</dbReference>
<dbReference type="PIR" id="E90738">
    <property type="entry name" value="E90738"/>
</dbReference>
<dbReference type="PIR" id="G85588">
    <property type="entry name" value="G85588"/>
</dbReference>
<dbReference type="RefSeq" id="NP_308904.1">
    <property type="nucleotide sequence ID" value="NC_002695.1"/>
</dbReference>
<dbReference type="RefSeq" id="WP_001218659.1">
    <property type="nucleotide sequence ID" value="NZ_VOAI01000006.1"/>
</dbReference>
<dbReference type="SMR" id="Q8X7X9"/>
<dbReference type="STRING" id="155864.Z1020"/>
<dbReference type="GeneID" id="917619"/>
<dbReference type="KEGG" id="ece:Z1020"/>
<dbReference type="KEGG" id="ecs:ECs_0877"/>
<dbReference type="PATRIC" id="fig|386585.9.peg.991"/>
<dbReference type="eggNOG" id="COG1199">
    <property type="taxonomic scope" value="Bacteria"/>
</dbReference>
<dbReference type="HOGENOM" id="CLU_012117_4_1_6"/>
<dbReference type="Proteomes" id="UP000000558">
    <property type="component" value="Chromosome"/>
</dbReference>
<dbReference type="Proteomes" id="UP000002519">
    <property type="component" value="Chromosome"/>
</dbReference>
<dbReference type="GO" id="GO:0051539">
    <property type="term" value="F:4 iron, 4 sulfur cluster binding"/>
    <property type="evidence" value="ECO:0007669"/>
    <property type="project" value="UniProtKB-UniRule"/>
</dbReference>
<dbReference type="GO" id="GO:0043139">
    <property type="term" value="F:5'-3' DNA helicase activity"/>
    <property type="evidence" value="ECO:0007669"/>
    <property type="project" value="UniProtKB-UniRule"/>
</dbReference>
<dbReference type="GO" id="GO:0005524">
    <property type="term" value="F:ATP binding"/>
    <property type="evidence" value="ECO:0007669"/>
    <property type="project" value="UniProtKB-UniRule"/>
</dbReference>
<dbReference type="GO" id="GO:0016887">
    <property type="term" value="F:ATP hydrolysis activity"/>
    <property type="evidence" value="ECO:0007669"/>
    <property type="project" value="RHEA"/>
</dbReference>
<dbReference type="GO" id="GO:0003677">
    <property type="term" value="F:DNA binding"/>
    <property type="evidence" value="ECO:0007669"/>
    <property type="project" value="UniProtKB-UniRule"/>
</dbReference>
<dbReference type="GO" id="GO:0033677">
    <property type="term" value="F:DNA/RNA helicase activity"/>
    <property type="evidence" value="ECO:0007669"/>
    <property type="project" value="TreeGrafter"/>
</dbReference>
<dbReference type="GO" id="GO:0046872">
    <property type="term" value="F:metal ion binding"/>
    <property type="evidence" value="ECO:0007669"/>
    <property type="project" value="UniProtKB-KW"/>
</dbReference>
<dbReference type="GO" id="GO:0006281">
    <property type="term" value="P:DNA repair"/>
    <property type="evidence" value="ECO:0007669"/>
    <property type="project" value="TreeGrafter"/>
</dbReference>
<dbReference type="GO" id="GO:0009432">
    <property type="term" value="P:SOS response"/>
    <property type="evidence" value="ECO:0007669"/>
    <property type="project" value="TreeGrafter"/>
</dbReference>
<dbReference type="FunFam" id="3.40.50.300:FF:000685">
    <property type="entry name" value="ATP-dependent DNA helicase DinG"/>
    <property type="match status" value="1"/>
</dbReference>
<dbReference type="FunFam" id="3.40.50.300:FF:000700">
    <property type="entry name" value="ATP-dependent DNA helicase DinG"/>
    <property type="match status" value="1"/>
</dbReference>
<dbReference type="Gene3D" id="3.40.50.300">
    <property type="entry name" value="P-loop containing nucleotide triphosphate hydrolases"/>
    <property type="match status" value="2"/>
</dbReference>
<dbReference type="HAMAP" id="MF_02205">
    <property type="entry name" value="DinG_proteobact"/>
    <property type="match status" value="1"/>
</dbReference>
<dbReference type="InterPro" id="IPR006555">
    <property type="entry name" value="ATP-dep_Helicase_C"/>
</dbReference>
<dbReference type="InterPro" id="IPR011545">
    <property type="entry name" value="DEAD/DEAH_box_helicase_dom"/>
</dbReference>
<dbReference type="InterPro" id="IPR045028">
    <property type="entry name" value="DinG/Rad3-like"/>
</dbReference>
<dbReference type="InterPro" id="IPR039000">
    <property type="entry name" value="DinG_proteobact"/>
</dbReference>
<dbReference type="InterPro" id="IPR014013">
    <property type="entry name" value="Helic_SF1/SF2_ATP-bd_DinG/Rad3"/>
</dbReference>
<dbReference type="InterPro" id="IPR006554">
    <property type="entry name" value="Helicase-like_DEXD_c2"/>
</dbReference>
<dbReference type="InterPro" id="IPR014001">
    <property type="entry name" value="Helicase_ATP-bd"/>
</dbReference>
<dbReference type="InterPro" id="IPR027417">
    <property type="entry name" value="P-loop_NTPase"/>
</dbReference>
<dbReference type="InterPro" id="IPR010614">
    <property type="entry name" value="RAD3-like_helicase_DEAD"/>
</dbReference>
<dbReference type="NCBIfam" id="NF008729">
    <property type="entry name" value="PRK11747.1"/>
    <property type="match status" value="1"/>
</dbReference>
<dbReference type="PANTHER" id="PTHR11472:SF59">
    <property type="entry name" value="ATP-DEPENDENT DNA HELICASE DING"/>
    <property type="match status" value="1"/>
</dbReference>
<dbReference type="PANTHER" id="PTHR11472">
    <property type="entry name" value="DNA REPAIR DEAD HELICASE RAD3/XP-D SUBFAMILY MEMBER"/>
    <property type="match status" value="1"/>
</dbReference>
<dbReference type="Pfam" id="PF00270">
    <property type="entry name" value="DEAD"/>
    <property type="match status" value="1"/>
</dbReference>
<dbReference type="Pfam" id="PF06733">
    <property type="entry name" value="DEAD_2"/>
    <property type="match status" value="1"/>
</dbReference>
<dbReference type="Pfam" id="PF13307">
    <property type="entry name" value="Helicase_C_2"/>
    <property type="match status" value="1"/>
</dbReference>
<dbReference type="SMART" id="SM00487">
    <property type="entry name" value="DEXDc"/>
    <property type="match status" value="1"/>
</dbReference>
<dbReference type="SMART" id="SM00488">
    <property type="entry name" value="DEXDc2"/>
    <property type="match status" value="1"/>
</dbReference>
<dbReference type="SMART" id="SM00491">
    <property type="entry name" value="HELICc2"/>
    <property type="match status" value="1"/>
</dbReference>
<dbReference type="SUPFAM" id="SSF52540">
    <property type="entry name" value="P-loop containing nucleoside triphosphate hydrolases"/>
    <property type="match status" value="1"/>
</dbReference>
<dbReference type="PROSITE" id="PS51193">
    <property type="entry name" value="HELICASE_ATP_BIND_2"/>
    <property type="match status" value="1"/>
</dbReference>
<dbReference type="PROSITE" id="PS51194">
    <property type="entry name" value="HELICASE_CTER"/>
    <property type="match status" value="1"/>
</dbReference>
<organism>
    <name type="scientific">Escherichia coli O157:H7</name>
    <dbReference type="NCBI Taxonomy" id="83334"/>
    <lineage>
        <taxon>Bacteria</taxon>
        <taxon>Pseudomonadati</taxon>
        <taxon>Pseudomonadota</taxon>
        <taxon>Gammaproteobacteria</taxon>
        <taxon>Enterobacterales</taxon>
        <taxon>Enterobacteriaceae</taxon>
        <taxon>Escherichia</taxon>
    </lineage>
</organism>
<proteinExistence type="inferred from homology"/>
<gene>
    <name evidence="1" type="primary">dinG</name>
    <name type="ordered locus">Z1020</name>
    <name type="ordered locus">ECs0877</name>
</gene>
<feature type="chain" id="PRO_0000101997" description="ATP-dependent DNA helicase DinG">
    <location>
        <begin position="1"/>
        <end position="716"/>
    </location>
</feature>
<feature type="domain" description="Helicase ATP-binding" evidence="1">
    <location>
        <begin position="17"/>
        <end position="294"/>
    </location>
</feature>
<feature type="domain" description="Helicase C-terminal" evidence="1">
    <location>
        <begin position="517"/>
        <end position="698"/>
    </location>
</feature>
<feature type="short sequence motif" description="DEAH box" evidence="1">
    <location>
        <begin position="131"/>
        <end position="134"/>
    </location>
</feature>
<feature type="short sequence motif" description="DEAH box" evidence="1">
    <location>
        <begin position="248"/>
        <end position="251"/>
    </location>
</feature>
<feature type="binding site" evidence="1 2">
    <location>
        <begin position="54"/>
        <end position="61"/>
    </location>
    <ligand>
        <name>ATP</name>
        <dbReference type="ChEBI" id="CHEBI:30616"/>
    </ligand>
</feature>
<feature type="binding site" evidence="1">
    <location>
        <position position="120"/>
    </location>
    <ligand>
        <name>[4Fe-4S] cluster</name>
        <dbReference type="ChEBI" id="CHEBI:49883"/>
    </ligand>
</feature>
<feature type="binding site" evidence="1">
    <location>
        <position position="194"/>
    </location>
    <ligand>
        <name>[4Fe-4S] cluster</name>
        <dbReference type="ChEBI" id="CHEBI:49883"/>
    </ligand>
</feature>
<feature type="binding site" evidence="1">
    <location>
        <position position="199"/>
    </location>
    <ligand>
        <name>[4Fe-4S] cluster</name>
        <dbReference type="ChEBI" id="CHEBI:49883"/>
    </ligand>
</feature>
<feature type="binding site" evidence="1">
    <location>
        <position position="205"/>
    </location>
    <ligand>
        <name>[4Fe-4S] cluster</name>
        <dbReference type="ChEBI" id="CHEBI:49883"/>
    </ligand>
</feature>
<comment type="function">
    <text evidence="1">DNA-dependent ATPase and 5'-3' DNA helicase. Unwinds D-loops, R-loops, forked DNA and G-quadruplex DNA.</text>
</comment>
<comment type="catalytic activity">
    <reaction evidence="1">
        <text>Couples ATP hydrolysis with the unwinding of duplex DNA at the replication fork by translocating in the 5'-3' direction. This creates two antiparallel DNA single strands (ssDNA). The leading ssDNA polymer is the template for DNA polymerase III holoenzyme which synthesizes a continuous strand.</text>
        <dbReference type="EC" id="5.6.2.3"/>
    </reaction>
</comment>
<comment type="catalytic activity">
    <reaction evidence="1">
        <text>ATP + H2O = ADP + phosphate + H(+)</text>
        <dbReference type="Rhea" id="RHEA:13065"/>
        <dbReference type="ChEBI" id="CHEBI:15377"/>
        <dbReference type="ChEBI" id="CHEBI:15378"/>
        <dbReference type="ChEBI" id="CHEBI:30616"/>
        <dbReference type="ChEBI" id="CHEBI:43474"/>
        <dbReference type="ChEBI" id="CHEBI:456216"/>
        <dbReference type="EC" id="5.6.2.3"/>
    </reaction>
</comment>
<comment type="cofactor">
    <cofactor evidence="1">
        <name>[4Fe-4S] cluster</name>
        <dbReference type="ChEBI" id="CHEBI:49883"/>
    </cofactor>
    <text evidence="1">Binds 1 [4Fe-4S] cluster.</text>
</comment>
<comment type="similarity">
    <text evidence="1">Belongs to the helicase family. DinG subfamily. Type 1 sub-subfamily.</text>
</comment>
<keyword id="KW-0004">4Fe-4S</keyword>
<keyword id="KW-0067">ATP-binding</keyword>
<keyword id="KW-0238">DNA-binding</keyword>
<keyword id="KW-0347">Helicase</keyword>
<keyword id="KW-0378">Hydrolase</keyword>
<keyword id="KW-0408">Iron</keyword>
<keyword id="KW-0411">Iron-sulfur</keyword>
<keyword id="KW-0413">Isomerase</keyword>
<keyword id="KW-0479">Metal-binding</keyword>
<keyword id="KW-0547">Nucleotide-binding</keyword>
<keyword id="KW-1185">Reference proteome</keyword>
<sequence length="716" mass="81459">MALTAALKAQIAAWYKALQEQIPDFIPRAPQRQMIADVAKTLAGEEGRHLAIEAPTGVGKTLSYLIPGIAIAREEQKTLVVSTANVALQDQIYSKDLPLLKKIIPDLKFTAAFGRGRYVCPRNLTALASTEPTQQDLLAFLDDELTPNNQEEQKRCAKLKGDLDTYKWDGLRDHTDIAIDDDLWRRLSTDKASCLNRNCYYYRECPFFVARREIQEAEVVVANHALVMAAMESEAVLPDPKNLLLVLDEGHHLPDVARDALEMSAEITAPWYRLQLDLFTKLVATCMEQFRPKTIPPLAIPERLNAHCEELYELIASLNNILNLYMPAGQEAEHRFAMGELPDEVLEICQRLAKLTEMLRGLAELFLNDLSEKTGSHDIVRLHRLILQMNRALGMFEAQSKLWRLASLAQSSGAPVTKWATREEREGQLHLWFHCVGIRVSDQLERLLWRSIPHIIVTSATLRSLNSFSRLQEMSGLKEKAGDRFVALDSPFNHCEQGKIVIPRMRVEPSIDNEEQHIAEMAAFFREQVESKKHLGMLVLFASGRAMQRFLDYVTDLRLMLLVQGDQPRYRLVELHRKRVANGERSVLVGLQSFAEGLDLKGDMLSQVHIHKIAFPPIDSPVVITEGEWLKSLNRYPFEVQSLPSASFNLIQQVGRLIRSHGCWGEVVIYDKRLLTKNYGKRLLDALPVFPIEQPEVPEGIVKKKEKTKSPRRRRR</sequence>
<name>DING_ECO57</name>
<evidence type="ECO:0000255" key="1">
    <source>
        <dbReference type="HAMAP-Rule" id="MF_02205"/>
    </source>
</evidence>
<evidence type="ECO:0000305" key="2"/>
<reference key="1">
    <citation type="journal article" date="2001" name="Nature">
        <title>Genome sequence of enterohaemorrhagic Escherichia coli O157:H7.</title>
        <authorList>
            <person name="Perna N.T."/>
            <person name="Plunkett G. III"/>
            <person name="Burland V."/>
            <person name="Mau B."/>
            <person name="Glasner J.D."/>
            <person name="Rose D.J."/>
            <person name="Mayhew G.F."/>
            <person name="Evans P.S."/>
            <person name="Gregor J."/>
            <person name="Kirkpatrick H.A."/>
            <person name="Posfai G."/>
            <person name="Hackett J."/>
            <person name="Klink S."/>
            <person name="Boutin A."/>
            <person name="Shao Y."/>
            <person name="Miller L."/>
            <person name="Grotbeck E.J."/>
            <person name="Davis N.W."/>
            <person name="Lim A."/>
            <person name="Dimalanta E.T."/>
            <person name="Potamousis K."/>
            <person name="Apodaca J."/>
            <person name="Anantharaman T.S."/>
            <person name="Lin J."/>
            <person name="Yen G."/>
            <person name="Schwartz D.C."/>
            <person name="Welch R.A."/>
            <person name="Blattner F.R."/>
        </authorList>
    </citation>
    <scope>NUCLEOTIDE SEQUENCE [LARGE SCALE GENOMIC DNA]</scope>
    <source>
        <strain>O157:H7 / EDL933 / ATCC 700927 / EHEC</strain>
    </source>
</reference>
<reference key="2">
    <citation type="journal article" date="2001" name="DNA Res.">
        <title>Complete genome sequence of enterohemorrhagic Escherichia coli O157:H7 and genomic comparison with a laboratory strain K-12.</title>
        <authorList>
            <person name="Hayashi T."/>
            <person name="Makino K."/>
            <person name="Ohnishi M."/>
            <person name="Kurokawa K."/>
            <person name="Ishii K."/>
            <person name="Yokoyama K."/>
            <person name="Han C.-G."/>
            <person name="Ohtsubo E."/>
            <person name="Nakayama K."/>
            <person name="Murata T."/>
            <person name="Tanaka M."/>
            <person name="Tobe T."/>
            <person name="Iida T."/>
            <person name="Takami H."/>
            <person name="Honda T."/>
            <person name="Sasakawa C."/>
            <person name="Ogasawara N."/>
            <person name="Yasunaga T."/>
            <person name="Kuhara S."/>
            <person name="Shiba T."/>
            <person name="Hattori M."/>
            <person name="Shinagawa H."/>
        </authorList>
    </citation>
    <scope>NUCLEOTIDE SEQUENCE [LARGE SCALE GENOMIC DNA]</scope>
    <source>
        <strain>O157:H7 / Sakai / RIMD 0509952 / EHEC</strain>
    </source>
</reference>